<reference key="1">
    <citation type="journal article" date="2005" name="Nucleic Acids Res.">
        <title>Genome dynamics and diversity of Shigella species, the etiologic agents of bacillary dysentery.</title>
        <authorList>
            <person name="Yang F."/>
            <person name="Yang J."/>
            <person name="Zhang X."/>
            <person name="Chen L."/>
            <person name="Jiang Y."/>
            <person name="Yan Y."/>
            <person name="Tang X."/>
            <person name="Wang J."/>
            <person name="Xiong Z."/>
            <person name="Dong J."/>
            <person name="Xue Y."/>
            <person name="Zhu Y."/>
            <person name="Xu X."/>
            <person name="Sun L."/>
            <person name="Chen S."/>
            <person name="Nie H."/>
            <person name="Peng J."/>
            <person name="Xu J."/>
            <person name="Wang Y."/>
            <person name="Yuan Z."/>
            <person name="Wen Y."/>
            <person name="Yao Z."/>
            <person name="Shen Y."/>
            <person name="Qiang B."/>
            <person name="Hou Y."/>
            <person name="Yu J."/>
            <person name="Jin Q."/>
        </authorList>
    </citation>
    <scope>NUCLEOTIDE SEQUENCE [LARGE SCALE GENOMIC DNA]</scope>
    <source>
        <strain>Sb227</strain>
    </source>
</reference>
<protein>
    <recommendedName>
        <fullName evidence="1">Large ribosomal subunit protein bL25</fullName>
    </recommendedName>
    <alternativeName>
        <fullName evidence="2">50S ribosomal protein L25</fullName>
    </alternativeName>
</protein>
<keyword id="KW-0687">Ribonucleoprotein</keyword>
<keyword id="KW-0689">Ribosomal protein</keyword>
<keyword id="KW-0694">RNA-binding</keyword>
<keyword id="KW-0699">rRNA-binding</keyword>
<feature type="chain" id="PRO_0000243106" description="Large ribosomal subunit protein bL25">
    <location>
        <begin position="1"/>
        <end position="94"/>
    </location>
</feature>
<name>RL25_SHIBS</name>
<accession>Q31YZ2</accession>
<dbReference type="EMBL" id="CP000036">
    <property type="protein sequence ID" value="ABB66716.1"/>
    <property type="molecule type" value="Genomic_DNA"/>
</dbReference>
<dbReference type="RefSeq" id="WP_000494182.1">
    <property type="nucleotide sequence ID" value="NC_007613.1"/>
</dbReference>
<dbReference type="SMR" id="Q31YZ2"/>
<dbReference type="KEGG" id="sbo:SBO_2139"/>
<dbReference type="HOGENOM" id="CLU_137946_0_0_6"/>
<dbReference type="Proteomes" id="UP000007067">
    <property type="component" value="Chromosome"/>
</dbReference>
<dbReference type="GO" id="GO:0022625">
    <property type="term" value="C:cytosolic large ribosomal subunit"/>
    <property type="evidence" value="ECO:0007669"/>
    <property type="project" value="TreeGrafter"/>
</dbReference>
<dbReference type="GO" id="GO:0008097">
    <property type="term" value="F:5S rRNA binding"/>
    <property type="evidence" value="ECO:0007669"/>
    <property type="project" value="InterPro"/>
</dbReference>
<dbReference type="GO" id="GO:0003735">
    <property type="term" value="F:structural constituent of ribosome"/>
    <property type="evidence" value="ECO:0007669"/>
    <property type="project" value="InterPro"/>
</dbReference>
<dbReference type="GO" id="GO:0006412">
    <property type="term" value="P:translation"/>
    <property type="evidence" value="ECO:0007669"/>
    <property type="project" value="UniProtKB-UniRule"/>
</dbReference>
<dbReference type="CDD" id="cd00495">
    <property type="entry name" value="Ribosomal_L25_TL5_CTC"/>
    <property type="match status" value="1"/>
</dbReference>
<dbReference type="FunFam" id="2.40.240.10:FF:000002">
    <property type="entry name" value="50S ribosomal protein L25"/>
    <property type="match status" value="1"/>
</dbReference>
<dbReference type="Gene3D" id="2.40.240.10">
    <property type="entry name" value="Ribosomal Protein L25, Chain P"/>
    <property type="match status" value="1"/>
</dbReference>
<dbReference type="HAMAP" id="MF_01336">
    <property type="entry name" value="Ribosomal_bL25"/>
    <property type="match status" value="1"/>
</dbReference>
<dbReference type="InterPro" id="IPR020056">
    <property type="entry name" value="Rbsml_bL25/Gln-tRNA_synth_N"/>
</dbReference>
<dbReference type="InterPro" id="IPR011035">
    <property type="entry name" value="Ribosomal_bL25/Gln-tRNA_synth"/>
</dbReference>
<dbReference type="InterPro" id="IPR020055">
    <property type="entry name" value="Ribosomal_bL25_short"/>
</dbReference>
<dbReference type="InterPro" id="IPR029751">
    <property type="entry name" value="Ribosomal_L25_dom"/>
</dbReference>
<dbReference type="InterPro" id="IPR020930">
    <property type="entry name" value="Ribosomal_uL5_bac-type"/>
</dbReference>
<dbReference type="NCBIfam" id="NF004612">
    <property type="entry name" value="PRK05943.1"/>
    <property type="match status" value="1"/>
</dbReference>
<dbReference type="PANTHER" id="PTHR33284">
    <property type="entry name" value="RIBOSOMAL PROTEIN L25/GLN-TRNA SYNTHETASE, ANTI-CODON-BINDING DOMAIN-CONTAINING PROTEIN"/>
    <property type="match status" value="1"/>
</dbReference>
<dbReference type="PANTHER" id="PTHR33284:SF1">
    <property type="entry name" value="RIBOSOMAL PROTEIN L25_GLN-TRNA SYNTHETASE, ANTI-CODON-BINDING DOMAIN-CONTAINING PROTEIN"/>
    <property type="match status" value="1"/>
</dbReference>
<dbReference type="Pfam" id="PF01386">
    <property type="entry name" value="Ribosomal_L25p"/>
    <property type="match status" value="1"/>
</dbReference>
<dbReference type="SUPFAM" id="SSF50715">
    <property type="entry name" value="Ribosomal protein L25-like"/>
    <property type="match status" value="1"/>
</dbReference>
<sequence>MFTINAEVRKEQGKGASRRLRAANKFPAIIYGGKEAPLAIELDHDKVMNMQAKAEFYSEVLAIVVDGKEIKVKAQDVQRHPYKPKLQHIDFVRA</sequence>
<comment type="function">
    <text evidence="1">This is one of the proteins that binds to the 5S RNA in the ribosome where it forms part of the central protuberance.</text>
</comment>
<comment type="subunit">
    <text evidence="1">Part of the 50S ribosomal subunit; part of the 5S rRNA/L5/L18/L25 subcomplex. Contacts the 5S rRNA. Binds to the 5S rRNA independently of L5 and L18.</text>
</comment>
<comment type="similarity">
    <text evidence="1">Belongs to the bacterial ribosomal protein bL25 family.</text>
</comment>
<proteinExistence type="inferred from homology"/>
<organism>
    <name type="scientific">Shigella boydii serotype 4 (strain Sb227)</name>
    <dbReference type="NCBI Taxonomy" id="300268"/>
    <lineage>
        <taxon>Bacteria</taxon>
        <taxon>Pseudomonadati</taxon>
        <taxon>Pseudomonadota</taxon>
        <taxon>Gammaproteobacteria</taxon>
        <taxon>Enterobacterales</taxon>
        <taxon>Enterobacteriaceae</taxon>
        <taxon>Shigella</taxon>
    </lineage>
</organism>
<gene>
    <name evidence="1" type="primary">rplY</name>
    <name type="ordered locus">SBO_2139</name>
</gene>
<evidence type="ECO:0000255" key="1">
    <source>
        <dbReference type="HAMAP-Rule" id="MF_01336"/>
    </source>
</evidence>
<evidence type="ECO:0000305" key="2"/>